<dbReference type="EC" id="2.1.1.182" evidence="1"/>
<dbReference type="EMBL" id="AE008923">
    <property type="protein sequence ID" value="AAM35751.1"/>
    <property type="molecule type" value="Genomic_DNA"/>
</dbReference>
<dbReference type="RefSeq" id="WP_003487450.1">
    <property type="nucleotide sequence ID" value="NC_003919.1"/>
</dbReference>
<dbReference type="SMR" id="Q8PP25"/>
<dbReference type="GeneID" id="66910052"/>
<dbReference type="KEGG" id="xac:XAC0863"/>
<dbReference type="eggNOG" id="COG0030">
    <property type="taxonomic scope" value="Bacteria"/>
</dbReference>
<dbReference type="HOGENOM" id="CLU_041220_0_1_6"/>
<dbReference type="Proteomes" id="UP000000576">
    <property type="component" value="Chromosome"/>
</dbReference>
<dbReference type="GO" id="GO:0005829">
    <property type="term" value="C:cytosol"/>
    <property type="evidence" value="ECO:0007669"/>
    <property type="project" value="TreeGrafter"/>
</dbReference>
<dbReference type="GO" id="GO:0052908">
    <property type="term" value="F:16S rRNA (adenine(1518)-N(6)/adenine(1519)-N(6))-dimethyltransferase activity"/>
    <property type="evidence" value="ECO:0007669"/>
    <property type="project" value="UniProtKB-EC"/>
</dbReference>
<dbReference type="GO" id="GO:0003723">
    <property type="term" value="F:RNA binding"/>
    <property type="evidence" value="ECO:0007669"/>
    <property type="project" value="UniProtKB-KW"/>
</dbReference>
<dbReference type="FunFam" id="1.10.8.100:FF:000001">
    <property type="entry name" value="Ribosomal RNA small subunit methyltransferase A"/>
    <property type="match status" value="1"/>
</dbReference>
<dbReference type="FunFam" id="3.40.50.150:FF:000222">
    <property type="entry name" value="Ribosomal RNA small subunit methyltransferase A"/>
    <property type="match status" value="1"/>
</dbReference>
<dbReference type="Gene3D" id="1.10.8.100">
    <property type="entry name" value="Ribosomal RNA adenine dimethylase-like, domain 2"/>
    <property type="match status" value="1"/>
</dbReference>
<dbReference type="Gene3D" id="3.40.50.150">
    <property type="entry name" value="Vaccinia Virus protein VP39"/>
    <property type="match status" value="1"/>
</dbReference>
<dbReference type="HAMAP" id="MF_00607">
    <property type="entry name" value="16SrRNA_methyltr_A"/>
    <property type="match status" value="1"/>
</dbReference>
<dbReference type="InterPro" id="IPR001737">
    <property type="entry name" value="KsgA/Erm"/>
</dbReference>
<dbReference type="InterPro" id="IPR023165">
    <property type="entry name" value="rRNA_Ade_diMease-like_C"/>
</dbReference>
<dbReference type="InterPro" id="IPR020596">
    <property type="entry name" value="rRNA_Ade_Mease_Trfase_CS"/>
</dbReference>
<dbReference type="InterPro" id="IPR020598">
    <property type="entry name" value="rRNA_Ade_methylase_Trfase_N"/>
</dbReference>
<dbReference type="InterPro" id="IPR011530">
    <property type="entry name" value="rRNA_adenine_dimethylase"/>
</dbReference>
<dbReference type="InterPro" id="IPR029063">
    <property type="entry name" value="SAM-dependent_MTases_sf"/>
</dbReference>
<dbReference type="NCBIfam" id="TIGR00755">
    <property type="entry name" value="ksgA"/>
    <property type="match status" value="1"/>
</dbReference>
<dbReference type="PANTHER" id="PTHR11727">
    <property type="entry name" value="DIMETHYLADENOSINE TRANSFERASE"/>
    <property type="match status" value="1"/>
</dbReference>
<dbReference type="PANTHER" id="PTHR11727:SF7">
    <property type="entry name" value="DIMETHYLADENOSINE TRANSFERASE-RELATED"/>
    <property type="match status" value="1"/>
</dbReference>
<dbReference type="Pfam" id="PF00398">
    <property type="entry name" value="RrnaAD"/>
    <property type="match status" value="1"/>
</dbReference>
<dbReference type="SMART" id="SM00650">
    <property type="entry name" value="rADc"/>
    <property type="match status" value="1"/>
</dbReference>
<dbReference type="SUPFAM" id="SSF53335">
    <property type="entry name" value="S-adenosyl-L-methionine-dependent methyltransferases"/>
    <property type="match status" value="1"/>
</dbReference>
<dbReference type="PROSITE" id="PS01131">
    <property type="entry name" value="RRNA_A_DIMETH"/>
    <property type="match status" value="1"/>
</dbReference>
<dbReference type="PROSITE" id="PS51689">
    <property type="entry name" value="SAM_RNA_A_N6_MT"/>
    <property type="match status" value="1"/>
</dbReference>
<proteinExistence type="inferred from homology"/>
<sequence>MNSSFSAPAKKSLGQHFLADRYYIDRIVQAVDPRAGQHLVEIGPGQGAITFPLLRKHGALTVIEFDRDLIAPLTEAAAPIGALRIIHRDVLSVDFTALADGTPIRLVGNLPYNISSPILFHALDHAAAVADMHFMLQKEVVDRMAAGPGSKVYGRLSVMLQAYCEVTALFVVPPGAFRPPPKVDSAVVRLVPRDPATVLINDRRRFADVVRAGFGQRRKTLRNALSAICEPAHFDAAQVRPDARAEQLEVADFIRLANVELA</sequence>
<evidence type="ECO:0000255" key="1">
    <source>
        <dbReference type="HAMAP-Rule" id="MF_00607"/>
    </source>
</evidence>
<feature type="chain" id="PRO_0000101643" description="Ribosomal RNA small subunit methyltransferase A">
    <location>
        <begin position="1"/>
        <end position="262"/>
    </location>
</feature>
<feature type="binding site" evidence="1">
    <location>
        <position position="16"/>
    </location>
    <ligand>
        <name>S-adenosyl-L-methionine</name>
        <dbReference type="ChEBI" id="CHEBI:59789"/>
    </ligand>
</feature>
<feature type="binding site" evidence="1">
    <location>
        <position position="18"/>
    </location>
    <ligand>
        <name>S-adenosyl-L-methionine</name>
        <dbReference type="ChEBI" id="CHEBI:59789"/>
    </ligand>
</feature>
<feature type="binding site" evidence="1">
    <location>
        <position position="43"/>
    </location>
    <ligand>
        <name>S-adenosyl-L-methionine</name>
        <dbReference type="ChEBI" id="CHEBI:59789"/>
    </ligand>
</feature>
<feature type="binding site" evidence="1">
    <location>
        <position position="64"/>
    </location>
    <ligand>
        <name>S-adenosyl-L-methionine</name>
        <dbReference type="ChEBI" id="CHEBI:59789"/>
    </ligand>
</feature>
<feature type="binding site" evidence="1">
    <location>
        <position position="89"/>
    </location>
    <ligand>
        <name>S-adenosyl-L-methionine</name>
        <dbReference type="ChEBI" id="CHEBI:59789"/>
    </ligand>
</feature>
<feature type="binding site" evidence="1">
    <location>
        <position position="109"/>
    </location>
    <ligand>
        <name>S-adenosyl-L-methionine</name>
        <dbReference type="ChEBI" id="CHEBI:59789"/>
    </ligand>
</feature>
<accession>Q8PP25</accession>
<name>RSMA_XANAC</name>
<keyword id="KW-0963">Cytoplasm</keyword>
<keyword id="KW-0489">Methyltransferase</keyword>
<keyword id="KW-0694">RNA-binding</keyword>
<keyword id="KW-0698">rRNA processing</keyword>
<keyword id="KW-0949">S-adenosyl-L-methionine</keyword>
<keyword id="KW-0808">Transferase</keyword>
<protein>
    <recommendedName>
        <fullName evidence="1">Ribosomal RNA small subunit methyltransferase A</fullName>
        <ecNumber evidence="1">2.1.1.182</ecNumber>
    </recommendedName>
    <alternativeName>
        <fullName evidence="1">16S rRNA (adenine(1518)-N(6)/adenine(1519)-N(6))-dimethyltransferase</fullName>
    </alternativeName>
    <alternativeName>
        <fullName evidence="1">16S rRNA dimethyladenosine transferase</fullName>
    </alternativeName>
    <alternativeName>
        <fullName evidence="1">16S rRNA dimethylase</fullName>
    </alternativeName>
    <alternativeName>
        <fullName evidence="1">S-adenosylmethionine-6-N', N'-adenosyl(rRNA) dimethyltransferase</fullName>
    </alternativeName>
</protein>
<comment type="function">
    <text evidence="1">Specifically dimethylates two adjacent adenosines (A1518 and A1519) in the loop of a conserved hairpin near the 3'-end of 16S rRNA in the 30S particle. May play a critical role in biogenesis of 30S subunits.</text>
</comment>
<comment type="catalytic activity">
    <reaction evidence="1">
        <text>adenosine(1518)/adenosine(1519) in 16S rRNA + 4 S-adenosyl-L-methionine = N(6)-dimethyladenosine(1518)/N(6)-dimethyladenosine(1519) in 16S rRNA + 4 S-adenosyl-L-homocysteine + 4 H(+)</text>
        <dbReference type="Rhea" id="RHEA:19609"/>
        <dbReference type="Rhea" id="RHEA-COMP:10232"/>
        <dbReference type="Rhea" id="RHEA-COMP:10233"/>
        <dbReference type="ChEBI" id="CHEBI:15378"/>
        <dbReference type="ChEBI" id="CHEBI:57856"/>
        <dbReference type="ChEBI" id="CHEBI:59789"/>
        <dbReference type="ChEBI" id="CHEBI:74411"/>
        <dbReference type="ChEBI" id="CHEBI:74493"/>
        <dbReference type="EC" id="2.1.1.182"/>
    </reaction>
</comment>
<comment type="subcellular location">
    <subcellularLocation>
        <location evidence="1">Cytoplasm</location>
    </subcellularLocation>
</comment>
<comment type="similarity">
    <text evidence="1">Belongs to the class I-like SAM-binding methyltransferase superfamily. rRNA adenine N(6)-methyltransferase family. RsmA subfamily.</text>
</comment>
<gene>
    <name evidence="1" type="primary">rsmA</name>
    <name evidence="1" type="synonym">ksgA</name>
    <name type="ordered locus">XAC0863</name>
</gene>
<organism>
    <name type="scientific">Xanthomonas axonopodis pv. citri (strain 306)</name>
    <dbReference type="NCBI Taxonomy" id="190486"/>
    <lineage>
        <taxon>Bacteria</taxon>
        <taxon>Pseudomonadati</taxon>
        <taxon>Pseudomonadota</taxon>
        <taxon>Gammaproteobacteria</taxon>
        <taxon>Lysobacterales</taxon>
        <taxon>Lysobacteraceae</taxon>
        <taxon>Xanthomonas</taxon>
    </lineage>
</organism>
<reference key="1">
    <citation type="journal article" date="2002" name="Nature">
        <title>Comparison of the genomes of two Xanthomonas pathogens with differing host specificities.</title>
        <authorList>
            <person name="da Silva A.C.R."/>
            <person name="Ferro J.A."/>
            <person name="Reinach F.C."/>
            <person name="Farah C.S."/>
            <person name="Furlan L.R."/>
            <person name="Quaggio R.B."/>
            <person name="Monteiro-Vitorello C.B."/>
            <person name="Van Sluys M.A."/>
            <person name="Almeida N.F. Jr."/>
            <person name="Alves L.M.C."/>
            <person name="do Amaral A.M."/>
            <person name="Bertolini M.C."/>
            <person name="Camargo L.E.A."/>
            <person name="Camarotte G."/>
            <person name="Cannavan F."/>
            <person name="Cardozo J."/>
            <person name="Chambergo F."/>
            <person name="Ciapina L.P."/>
            <person name="Cicarelli R.M.B."/>
            <person name="Coutinho L.L."/>
            <person name="Cursino-Santos J.R."/>
            <person name="El-Dorry H."/>
            <person name="Faria J.B."/>
            <person name="Ferreira A.J.S."/>
            <person name="Ferreira R.C.C."/>
            <person name="Ferro M.I.T."/>
            <person name="Formighieri E.F."/>
            <person name="Franco M.C."/>
            <person name="Greggio C.C."/>
            <person name="Gruber A."/>
            <person name="Katsuyama A.M."/>
            <person name="Kishi L.T."/>
            <person name="Leite R.P."/>
            <person name="Lemos E.G.M."/>
            <person name="Lemos M.V.F."/>
            <person name="Locali E.C."/>
            <person name="Machado M.A."/>
            <person name="Madeira A.M.B.N."/>
            <person name="Martinez-Rossi N.M."/>
            <person name="Martins E.C."/>
            <person name="Meidanis J."/>
            <person name="Menck C.F.M."/>
            <person name="Miyaki C.Y."/>
            <person name="Moon D.H."/>
            <person name="Moreira L.M."/>
            <person name="Novo M.T.M."/>
            <person name="Okura V.K."/>
            <person name="Oliveira M.C."/>
            <person name="Oliveira V.R."/>
            <person name="Pereira H.A."/>
            <person name="Rossi A."/>
            <person name="Sena J.A.D."/>
            <person name="Silva C."/>
            <person name="de Souza R.F."/>
            <person name="Spinola L.A.F."/>
            <person name="Takita M.A."/>
            <person name="Tamura R.E."/>
            <person name="Teixeira E.C."/>
            <person name="Tezza R.I.D."/>
            <person name="Trindade dos Santos M."/>
            <person name="Truffi D."/>
            <person name="Tsai S.M."/>
            <person name="White F.F."/>
            <person name="Setubal J.C."/>
            <person name="Kitajima J.P."/>
        </authorList>
    </citation>
    <scope>NUCLEOTIDE SEQUENCE [LARGE SCALE GENOMIC DNA]</scope>
    <source>
        <strain>306</strain>
    </source>
</reference>